<sequence length="256" mass="28760">MGQKTNPNGLRLGIIRTWESKWYADQKDVPALIKEDALIREFLNENFSKAGVSQIEIERVKAKSKERVTIKLYVSKPGIALGKEASVKNKAVSTLEYLTKKEVILNIIEVRRPEKVAVLVAQSIAEQLENRASFRRAQKMAIQRALKSGAKGIRTLVSGRLGGAEMARSEGYSEGRVPLHTLRADVDYATAEAKTTYGILGIKVWIYHGEVLPGQSILDTRKPFEAGNQKRGQKRRPRNDQPGQRPQQRNRNSKED</sequence>
<name>RS3_ACHLI</name>
<organism>
    <name type="scientific">Acholeplasma laidlawii (strain PG-8A)</name>
    <dbReference type="NCBI Taxonomy" id="441768"/>
    <lineage>
        <taxon>Bacteria</taxon>
        <taxon>Bacillati</taxon>
        <taxon>Mycoplasmatota</taxon>
        <taxon>Mollicutes</taxon>
        <taxon>Acholeplasmatales</taxon>
        <taxon>Acholeplasmataceae</taxon>
        <taxon>Acholeplasma</taxon>
    </lineage>
</organism>
<keyword id="KW-1185">Reference proteome</keyword>
<keyword id="KW-0687">Ribonucleoprotein</keyword>
<keyword id="KW-0689">Ribosomal protein</keyword>
<keyword id="KW-0694">RNA-binding</keyword>
<keyword id="KW-0699">rRNA-binding</keyword>
<comment type="function">
    <text evidence="1">Binds the lower part of the 30S subunit head. Binds mRNA in the 70S ribosome, positioning it for translation.</text>
</comment>
<comment type="subunit">
    <text evidence="1">Part of the 30S ribosomal subunit. Forms a tight complex with proteins S10 and S14.</text>
</comment>
<comment type="similarity">
    <text evidence="1">Belongs to the universal ribosomal protein uS3 family.</text>
</comment>
<accession>A9NED9</accession>
<proteinExistence type="inferred from homology"/>
<protein>
    <recommendedName>
        <fullName evidence="1">Small ribosomal subunit protein uS3</fullName>
    </recommendedName>
    <alternativeName>
        <fullName evidence="3">30S ribosomal protein S3</fullName>
    </alternativeName>
</protein>
<gene>
    <name evidence="1" type="primary">rpsC</name>
    <name type="ordered locus">ACL_0093</name>
</gene>
<evidence type="ECO:0000255" key="1">
    <source>
        <dbReference type="HAMAP-Rule" id="MF_01309"/>
    </source>
</evidence>
<evidence type="ECO:0000256" key="2">
    <source>
        <dbReference type="SAM" id="MobiDB-lite"/>
    </source>
</evidence>
<evidence type="ECO:0000305" key="3"/>
<feature type="chain" id="PRO_1000086081" description="Small ribosomal subunit protein uS3">
    <location>
        <begin position="1"/>
        <end position="256"/>
    </location>
</feature>
<feature type="domain" description="KH type-2" evidence="1">
    <location>
        <begin position="39"/>
        <end position="111"/>
    </location>
</feature>
<feature type="region of interest" description="Disordered" evidence="2">
    <location>
        <begin position="219"/>
        <end position="256"/>
    </location>
</feature>
<feature type="compositionally biased region" description="Low complexity" evidence="2">
    <location>
        <begin position="240"/>
        <end position="250"/>
    </location>
</feature>
<reference key="1">
    <citation type="journal article" date="2011" name="J. Bacteriol.">
        <title>Complete genome and proteome of Acholeplasma laidlawii.</title>
        <authorList>
            <person name="Lazarev V.N."/>
            <person name="Levitskii S.A."/>
            <person name="Basovskii Y.I."/>
            <person name="Chukin M.M."/>
            <person name="Akopian T.A."/>
            <person name="Vereshchagin V.V."/>
            <person name="Kostrjukova E.S."/>
            <person name="Kovaleva G.Y."/>
            <person name="Kazanov M.D."/>
            <person name="Malko D.B."/>
            <person name="Vitreschak A.G."/>
            <person name="Sernova N.V."/>
            <person name="Gelfand M.S."/>
            <person name="Demina I.A."/>
            <person name="Serebryakova M.V."/>
            <person name="Galyamina M.A."/>
            <person name="Vtyurin N.N."/>
            <person name="Rogov S.I."/>
            <person name="Alexeev D.G."/>
            <person name="Ladygina V.G."/>
            <person name="Govorun V.M."/>
        </authorList>
    </citation>
    <scope>NUCLEOTIDE SEQUENCE [LARGE SCALE GENOMIC DNA]</scope>
    <source>
        <strain>PG-8A</strain>
    </source>
</reference>
<dbReference type="EMBL" id="CP000896">
    <property type="protein sequence ID" value="ABX80719.1"/>
    <property type="molecule type" value="Genomic_DNA"/>
</dbReference>
<dbReference type="RefSeq" id="WP_012242050.1">
    <property type="nucleotide sequence ID" value="NC_010163.1"/>
</dbReference>
<dbReference type="SMR" id="A9NED9"/>
<dbReference type="STRING" id="441768.ACL_0093"/>
<dbReference type="GeneID" id="41338295"/>
<dbReference type="KEGG" id="acl:ACL_0093"/>
<dbReference type="eggNOG" id="COG0092">
    <property type="taxonomic scope" value="Bacteria"/>
</dbReference>
<dbReference type="HOGENOM" id="CLU_058591_0_2_14"/>
<dbReference type="OrthoDB" id="9806396at2"/>
<dbReference type="Proteomes" id="UP000008558">
    <property type="component" value="Chromosome"/>
</dbReference>
<dbReference type="GO" id="GO:0022627">
    <property type="term" value="C:cytosolic small ribosomal subunit"/>
    <property type="evidence" value="ECO:0007669"/>
    <property type="project" value="TreeGrafter"/>
</dbReference>
<dbReference type="GO" id="GO:0003729">
    <property type="term" value="F:mRNA binding"/>
    <property type="evidence" value="ECO:0007669"/>
    <property type="project" value="UniProtKB-UniRule"/>
</dbReference>
<dbReference type="GO" id="GO:0019843">
    <property type="term" value="F:rRNA binding"/>
    <property type="evidence" value="ECO:0007669"/>
    <property type="project" value="UniProtKB-UniRule"/>
</dbReference>
<dbReference type="GO" id="GO:0003735">
    <property type="term" value="F:structural constituent of ribosome"/>
    <property type="evidence" value="ECO:0007669"/>
    <property type="project" value="InterPro"/>
</dbReference>
<dbReference type="GO" id="GO:0006412">
    <property type="term" value="P:translation"/>
    <property type="evidence" value="ECO:0007669"/>
    <property type="project" value="UniProtKB-UniRule"/>
</dbReference>
<dbReference type="CDD" id="cd02412">
    <property type="entry name" value="KH-II_30S_S3"/>
    <property type="match status" value="1"/>
</dbReference>
<dbReference type="FunFam" id="3.30.300.20:FF:000001">
    <property type="entry name" value="30S ribosomal protein S3"/>
    <property type="match status" value="1"/>
</dbReference>
<dbReference type="Gene3D" id="3.30.300.20">
    <property type="match status" value="1"/>
</dbReference>
<dbReference type="Gene3D" id="3.30.1140.32">
    <property type="entry name" value="Ribosomal protein S3, C-terminal domain"/>
    <property type="match status" value="1"/>
</dbReference>
<dbReference type="HAMAP" id="MF_01309_B">
    <property type="entry name" value="Ribosomal_uS3_B"/>
    <property type="match status" value="1"/>
</dbReference>
<dbReference type="InterPro" id="IPR015946">
    <property type="entry name" value="KH_dom-like_a/b"/>
</dbReference>
<dbReference type="InterPro" id="IPR004044">
    <property type="entry name" value="KH_dom_type_2"/>
</dbReference>
<dbReference type="InterPro" id="IPR009019">
    <property type="entry name" value="KH_sf_prok-type"/>
</dbReference>
<dbReference type="InterPro" id="IPR036419">
    <property type="entry name" value="Ribosomal_S3_C_sf"/>
</dbReference>
<dbReference type="InterPro" id="IPR005704">
    <property type="entry name" value="Ribosomal_uS3_bac-typ"/>
</dbReference>
<dbReference type="InterPro" id="IPR001351">
    <property type="entry name" value="Ribosomal_uS3_C"/>
</dbReference>
<dbReference type="InterPro" id="IPR018280">
    <property type="entry name" value="Ribosomal_uS3_CS"/>
</dbReference>
<dbReference type="NCBIfam" id="TIGR01009">
    <property type="entry name" value="rpsC_bact"/>
    <property type="match status" value="1"/>
</dbReference>
<dbReference type="PANTHER" id="PTHR11760">
    <property type="entry name" value="30S/40S RIBOSOMAL PROTEIN S3"/>
    <property type="match status" value="1"/>
</dbReference>
<dbReference type="PANTHER" id="PTHR11760:SF19">
    <property type="entry name" value="SMALL RIBOSOMAL SUBUNIT PROTEIN US3C"/>
    <property type="match status" value="1"/>
</dbReference>
<dbReference type="Pfam" id="PF07650">
    <property type="entry name" value="KH_2"/>
    <property type="match status" value="1"/>
</dbReference>
<dbReference type="Pfam" id="PF00189">
    <property type="entry name" value="Ribosomal_S3_C"/>
    <property type="match status" value="1"/>
</dbReference>
<dbReference type="SUPFAM" id="SSF54814">
    <property type="entry name" value="Prokaryotic type KH domain (KH-domain type II)"/>
    <property type="match status" value="1"/>
</dbReference>
<dbReference type="SUPFAM" id="SSF54821">
    <property type="entry name" value="Ribosomal protein S3 C-terminal domain"/>
    <property type="match status" value="1"/>
</dbReference>
<dbReference type="PROSITE" id="PS50823">
    <property type="entry name" value="KH_TYPE_2"/>
    <property type="match status" value="1"/>
</dbReference>
<dbReference type="PROSITE" id="PS00548">
    <property type="entry name" value="RIBOSOMAL_S3"/>
    <property type="match status" value="1"/>
</dbReference>